<name>GLBA2_OLIMA</name>
<sequence length="158" mass="16966">MKSLIVFACLVAYAAADCTSLNRLLVKRQWAEAYGEGTNRELLGNRIWEDLFANMPDARGLFSRVNGNDIDSSEFQAHSLRVLGGLDMCVASLDDVPVLNALLARLNSQHDSRGIPAAGYPAFVASAISAVRATVGARSFDNDAWNSCMNQIVSGISG</sequence>
<evidence type="ECO:0000255" key="1">
    <source>
        <dbReference type="PROSITE-ProRule" id="PRU00238"/>
    </source>
</evidence>
<evidence type="ECO:0000269" key="2">
    <source>
    </source>
</evidence>
<evidence type="ECO:0000269" key="3">
    <source>
    </source>
</evidence>
<evidence type="ECO:0000269" key="4">
    <source>
    </source>
</evidence>
<evidence type="ECO:0000305" key="5"/>
<evidence type="ECO:0007829" key="6">
    <source>
        <dbReference type="PDB" id="7E96"/>
    </source>
</evidence>
<evidence type="ECO:0007829" key="7">
    <source>
        <dbReference type="PDB" id="7E99"/>
    </source>
</evidence>
<comment type="function">
    <text>The extracellular giant hemoglobin is able to bind and transport oxygen and hydrosulfide simultaneously and reversibly at two different sites.</text>
</comment>
<comment type="subunit">
    <text evidence="3">The 400 kDa hemoglobin consists of a spherical 24-mer arranged as a double layer of dome-shaped dodecamers. Each dodecamer is composed of the 3-fold trimer of the tetramer A1-A2-B1-B2 having one intra-tetramer (A1-B2) disulfide bond and one inter-tetramer (B1-B2) disulfide bond per tetramer.</text>
</comment>
<comment type="subcellular location">
    <subcellularLocation>
        <location>Secreted</location>
    </subcellularLocation>
</comment>
<comment type="similarity">
    <text evidence="1">Belongs to the globin family.</text>
</comment>
<gene>
    <name type="primary">ghbA2</name>
</gene>
<protein>
    <recommendedName>
        <fullName>Extracellular giant hemoglobin major globin subunit A2</fullName>
    </recommendedName>
    <alternativeName>
        <fullName>Major globin chain a5</fullName>
    </alternativeName>
</protein>
<dbReference type="EMBL" id="AB185391">
    <property type="protein sequence ID" value="BAD86542.1"/>
    <property type="molecule type" value="mRNA"/>
</dbReference>
<dbReference type="PIR" id="S72251">
    <property type="entry name" value="S72251"/>
</dbReference>
<dbReference type="PDB" id="2D2M">
    <property type="method" value="X-ray"/>
    <property type="resolution" value="2.85 A"/>
    <property type="chains" value="B=17-158"/>
</dbReference>
<dbReference type="PDB" id="2D2N">
    <property type="method" value="X-ray"/>
    <property type="resolution" value="3.20 A"/>
    <property type="chains" value="B=17-158"/>
</dbReference>
<dbReference type="PDB" id="2ZFO">
    <property type="method" value="X-ray"/>
    <property type="resolution" value="1.95 A"/>
    <property type="chains" value="B=17-158"/>
</dbReference>
<dbReference type="PDB" id="2ZS0">
    <property type="method" value="X-ray"/>
    <property type="resolution" value="1.60 A"/>
    <property type="chains" value="B=17-158"/>
</dbReference>
<dbReference type="PDB" id="2ZS1">
    <property type="method" value="X-ray"/>
    <property type="resolution" value="1.70 A"/>
    <property type="chains" value="B=17-158"/>
</dbReference>
<dbReference type="PDB" id="7E96">
    <property type="method" value="X-ray"/>
    <property type="resolution" value="2.40 A"/>
    <property type="chains" value="B=17-158"/>
</dbReference>
<dbReference type="PDB" id="7E97">
    <property type="method" value="X-ray"/>
    <property type="resolution" value="2.70 A"/>
    <property type="chains" value="B=17-158"/>
</dbReference>
<dbReference type="PDB" id="7E98">
    <property type="method" value="X-ray"/>
    <property type="resolution" value="2.20 A"/>
    <property type="chains" value="B=17-158"/>
</dbReference>
<dbReference type="PDB" id="7E99">
    <property type="method" value="X-ray"/>
    <property type="resolution" value="2.10 A"/>
    <property type="chains" value="B=17-158"/>
</dbReference>
<dbReference type="PDBsum" id="2D2M"/>
<dbReference type="PDBsum" id="2D2N"/>
<dbReference type="PDBsum" id="2ZFO"/>
<dbReference type="PDBsum" id="2ZS0"/>
<dbReference type="PDBsum" id="2ZS1"/>
<dbReference type="PDBsum" id="7E96"/>
<dbReference type="PDBsum" id="7E97"/>
<dbReference type="PDBsum" id="7E98"/>
<dbReference type="PDBsum" id="7E99"/>
<dbReference type="SMR" id="Q7M413"/>
<dbReference type="EvolutionaryTrace" id="Q7M413"/>
<dbReference type="GO" id="GO:0005576">
    <property type="term" value="C:extracellular region"/>
    <property type="evidence" value="ECO:0007669"/>
    <property type="project" value="UniProtKB-SubCell"/>
</dbReference>
<dbReference type="GO" id="GO:0005833">
    <property type="term" value="C:hemoglobin complex"/>
    <property type="evidence" value="ECO:0007669"/>
    <property type="project" value="InterPro"/>
</dbReference>
<dbReference type="GO" id="GO:0020037">
    <property type="term" value="F:heme binding"/>
    <property type="evidence" value="ECO:0007669"/>
    <property type="project" value="InterPro"/>
</dbReference>
<dbReference type="GO" id="GO:0005506">
    <property type="term" value="F:iron ion binding"/>
    <property type="evidence" value="ECO:0007669"/>
    <property type="project" value="InterPro"/>
</dbReference>
<dbReference type="GO" id="GO:0019825">
    <property type="term" value="F:oxygen binding"/>
    <property type="evidence" value="ECO:0007669"/>
    <property type="project" value="InterPro"/>
</dbReference>
<dbReference type="GO" id="GO:0005344">
    <property type="term" value="F:oxygen carrier activity"/>
    <property type="evidence" value="ECO:0007669"/>
    <property type="project" value="UniProtKB-KW"/>
</dbReference>
<dbReference type="CDD" id="cd01040">
    <property type="entry name" value="Mb-like"/>
    <property type="match status" value="1"/>
</dbReference>
<dbReference type="Gene3D" id="1.10.490.10">
    <property type="entry name" value="Globins"/>
    <property type="match status" value="1"/>
</dbReference>
<dbReference type="InterPro" id="IPR002336">
    <property type="entry name" value="Erythrocruorin"/>
</dbReference>
<dbReference type="InterPro" id="IPR000971">
    <property type="entry name" value="Globin"/>
</dbReference>
<dbReference type="InterPro" id="IPR009050">
    <property type="entry name" value="Globin-like_sf"/>
</dbReference>
<dbReference type="InterPro" id="IPR012292">
    <property type="entry name" value="Globin/Proto"/>
</dbReference>
<dbReference type="InterPro" id="IPR014610">
    <property type="entry name" value="Haemoglobin_extracell"/>
</dbReference>
<dbReference type="InterPro" id="IPR044399">
    <property type="entry name" value="Mb-like_M"/>
</dbReference>
<dbReference type="Pfam" id="PF00042">
    <property type="entry name" value="Globin"/>
    <property type="match status" value="1"/>
</dbReference>
<dbReference type="PIRSF" id="PIRSF036517">
    <property type="entry name" value="Ext_hemo"/>
    <property type="match status" value="1"/>
</dbReference>
<dbReference type="PRINTS" id="PR00611">
    <property type="entry name" value="ERYTHCRUORIN"/>
</dbReference>
<dbReference type="SUPFAM" id="SSF46458">
    <property type="entry name" value="Globin-like"/>
    <property type="match status" value="1"/>
</dbReference>
<dbReference type="PROSITE" id="PS01033">
    <property type="entry name" value="GLOBIN"/>
    <property type="match status" value="1"/>
</dbReference>
<feature type="signal peptide" evidence="2 4">
    <location>
        <begin position="1"/>
        <end position="16"/>
    </location>
</feature>
<feature type="chain" id="PRO_0000052517" description="Extracellular giant hemoglobin major globin subunit A2">
    <location>
        <begin position="17"/>
        <end position="158"/>
    </location>
</feature>
<feature type="domain" description="Globin" evidence="1">
    <location>
        <begin position="17"/>
        <end position="158"/>
    </location>
</feature>
<feature type="binding site" evidence="5">
    <location>
        <position position="89"/>
    </location>
    <ligand>
        <name>hydrogen sulfide</name>
        <dbReference type="ChEBI" id="CHEBI:29919"/>
    </ligand>
</feature>
<feature type="binding site" description="proximal binding residue">
    <location>
        <position position="110"/>
    </location>
    <ligand>
        <name>heme b</name>
        <dbReference type="ChEBI" id="CHEBI:60344"/>
    </ligand>
    <ligandPart>
        <name>Fe</name>
        <dbReference type="ChEBI" id="CHEBI:18248"/>
    </ligandPart>
</feature>
<feature type="disulfide bond" evidence="3">
    <location>
        <begin position="18"/>
        <end position="148"/>
    </location>
</feature>
<feature type="sequence conflict" description="In Ref. 1; AA sequence." evidence="5" ref="1">
    <original>N</original>
    <variation>S</variation>
    <location>
        <position position="39"/>
    </location>
</feature>
<feature type="helix" evidence="7">
    <location>
        <begin position="20"/>
        <end position="34"/>
    </location>
</feature>
<feature type="helix" evidence="7">
    <location>
        <begin position="39"/>
        <end position="54"/>
    </location>
</feature>
<feature type="helix" evidence="7">
    <location>
        <begin position="56"/>
        <end position="65"/>
    </location>
</feature>
<feature type="turn" evidence="7">
    <location>
        <begin position="66"/>
        <end position="68"/>
    </location>
</feature>
<feature type="helix" evidence="7">
    <location>
        <begin position="73"/>
        <end position="91"/>
    </location>
</feature>
<feature type="turn" evidence="7">
    <location>
        <begin position="92"/>
        <end position="94"/>
    </location>
</feature>
<feature type="helix" evidence="7">
    <location>
        <begin position="96"/>
        <end position="110"/>
    </location>
</feature>
<feature type="turn" evidence="7">
    <location>
        <begin position="111"/>
        <end position="114"/>
    </location>
</feature>
<feature type="helix" evidence="7">
    <location>
        <begin position="119"/>
        <end position="135"/>
    </location>
</feature>
<feature type="helix" evidence="6">
    <location>
        <begin position="137"/>
        <end position="139"/>
    </location>
</feature>
<feature type="helix" evidence="7">
    <location>
        <begin position="142"/>
        <end position="156"/>
    </location>
</feature>
<organism>
    <name type="scientific">Oligobrachia mashikoi</name>
    <name type="common">Beard worm</name>
    <dbReference type="NCBI Taxonomy" id="55676"/>
    <lineage>
        <taxon>Eukaryota</taxon>
        <taxon>Metazoa</taxon>
        <taxon>Spiralia</taxon>
        <taxon>Lophotrochozoa</taxon>
        <taxon>Annelida</taxon>
        <taxon>Polychaeta</taxon>
        <taxon>Sedentaria</taxon>
        <taxon>Canalipalpata</taxon>
        <taxon>Sabellida</taxon>
        <taxon>Siboglinidae</taxon>
        <taxon>Oligobrachia</taxon>
    </lineage>
</organism>
<keyword id="KW-0002">3D-structure</keyword>
<keyword id="KW-0903">Direct protein sequencing</keyword>
<keyword id="KW-1015">Disulfide bond</keyword>
<keyword id="KW-0349">Heme</keyword>
<keyword id="KW-0408">Iron</keyword>
<keyword id="KW-0479">Metal-binding</keyword>
<keyword id="KW-0561">Oxygen transport</keyword>
<keyword id="KW-0964">Secreted</keyword>
<keyword id="KW-0732">Signal</keyword>
<keyword id="KW-0813">Transport</keyword>
<accession>Q7M413</accession>
<accession>Q5KSC0</accession>
<reference key="1">
    <citation type="journal article" date="2005" name="Zool. Sci.">
        <title>Purification, characterization and sequence analyses of the extracellular giant hemoglobin from Oligobrachia mashikoi.</title>
        <authorList>
            <person name="Nakagawa T."/>
            <person name="Onoda S."/>
            <person name="Kanemori M."/>
            <person name="Sasayama Y."/>
            <person name="Fukumori Y."/>
        </authorList>
    </citation>
    <scope>NUCLEOTIDE SEQUENCE [MRNA]</scope>
    <scope>PROTEIN SEQUENCE OF 17-36</scope>
</reference>
<reference key="2">
    <citation type="journal article" date="1996" name="Biochim. Biophys. Acta">
        <title>Electrospray ionization mass spectrometric composition of the 400 kDa hemoglobin from the pogonophoran Oligobrachia mashikoi and the primary structures of three major globin chains.</title>
        <authorList>
            <person name="Yuasa H.J."/>
            <person name="Green B.N."/>
            <person name="Takagi T."/>
            <person name="Suzuki N."/>
            <person name="Vinogradov S.N."/>
            <person name="Suzuki T."/>
        </authorList>
    </citation>
    <scope>NUCLEOTIDE SEQUENCE [MRNA] OF 37-158</scope>
    <scope>PROTEIN SEQUENCE OF 17-44</scope>
    <scope>IDENTIFICATION BY MASS SPECTROMETRY</scope>
</reference>
<reference key="3">
    <citation type="journal article" date="2005" name="Proc. Natl. Acad. Sci. U.S.A.">
        <title>Structure of an extracellular giant hemoglobin of the gutless beard worm Oligobrachia mashikoi.</title>
        <authorList>
            <person name="Numoto N."/>
            <person name="Nakagawa T."/>
            <person name="Kita A."/>
            <person name="Sasayama Y."/>
            <person name="Fukumori Y."/>
            <person name="Miki K."/>
        </authorList>
    </citation>
    <scope>X-RAY CRYSTALLOGRAPHY (2.85 ANGSTROMS) OF 17-158</scope>
    <scope>SUBUNIT</scope>
    <scope>METAL</scope>
    <scope>DISULFIDE BONDS</scope>
</reference>
<proteinExistence type="evidence at protein level"/>